<protein>
    <recommendedName>
        <fullName>Meiotic mRNA stability protein kinase SSN3</fullName>
        <ecNumber evidence="4 6 8 9 10 14 20">2.7.11.22</ecNumber>
        <ecNumber evidence="4 6 8 9 10 14 20">2.7.11.23</ecNumber>
    </recommendedName>
    <alternativeName>
        <fullName>Cyclin-dependent kinase 8</fullName>
    </alternativeName>
    <alternativeName>
        <fullName>Suppressor of RNA polymerase B SRB10</fullName>
    </alternativeName>
</protein>
<evidence type="ECO:0000255" key="1">
    <source>
        <dbReference type="PROSITE-ProRule" id="PRU00159"/>
    </source>
</evidence>
<evidence type="ECO:0000255" key="2">
    <source>
        <dbReference type="PROSITE-ProRule" id="PRU10027"/>
    </source>
</evidence>
<evidence type="ECO:0000256" key="3">
    <source>
        <dbReference type="SAM" id="MobiDB-lite"/>
    </source>
</evidence>
<evidence type="ECO:0000269" key="4">
    <source>
    </source>
</evidence>
<evidence type="ECO:0000269" key="5">
    <source>
    </source>
</evidence>
<evidence type="ECO:0000269" key="6">
    <source>
    </source>
</evidence>
<evidence type="ECO:0000269" key="7">
    <source>
    </source>
</evidence>
<evidence type="ECO:0000269" key="8">
    <source>
    </source>
</evidence>
<evidence type="ECO:0000269" key="9">
    <source>
    </source>
</evidence>
<evidence type="ECO:0000269" key="10">
    <source>
    </source>
</evidence>
<evidence type="ECO:0000269" key="11">
    <source>
    </source>
</evidence>
<evidence type="ECO:0000269" key="12">
    <source>
    </source>
</evidence>
<evidence type="ECO:0000269" key="13">
    <source>
    </source>
</evidence>
<evidence type="ECO:0000269" key="14">
    <source>
    </source>
</evidence>
<evidence type="ECO:0000269" key="15">
    <source>
    </source>
</evidence>
<evidence type="ECO:0000269" key="16">
    <source>
    </source>
</evidence>
<evidence type="ECO:0000269" key="17">
    <source>
    </source>
</evidence>
<evidence type="ECO:0000269" key="18">
    <source>
    </source>
</evidence>
<evidence type="ECO:0000269" key="19">
    <source>
    </source>
</evidence>
<evidence type="ECO:0000269" key="20">
    <source>
    </source>
</evidence>
<evidence type="ECO:0000269" key="21">
    <source>
    </source>
</evidence>
<evidence type="ECO:0000305" key="22"/>
<accession>P39073</accession>
<accession>D6W3X1</accession>
<feature type="chain" id="PRO_0000086784" description="Meiotic mRNA stability protein kinase SSN3">
    <location>
        <begin position="1"/>
        <end position="555"/>
    </location>
</feature>
<feature type="domain" description="Protein kinase" evidence="1">
    <location>
        <begin position="75"/>
        <end position="463"/>
    </location>
</feature>
<feature type="region of interest" description="Disordered" evidence="3">
    <location>
        <begin position="100"/>
        <end position="166"/>
    </location>
</feature>
<feature type="compositionally biased region" description="Polar residues" evidence="3">
    <location>
        <begin position="100"/>
        <end position="138"/>
    </location>
</feature>
<feature type="active site" description="Proton acceptor" evidence="1 2">
    <location>
        <position position="286"/>
    </location>
</feature>
<feature type="binding site" evidence="1">
    <location>
        <begin position="81"/>
        <end position="89"/>
    </location>
    <ligand>
        <name>ATP</name>
        <dbReference type="ChEBI" id="CHEBI:30616"/>
    </ligand>
</feature>
<feature type="binding site" evidence="22">
    <location>
        <position position="183"/>
    </location>
    <ligand>
        <name>ATP</name>
        <dbReference type="ChEBI" id="CHEBI:30616"/>
    </ligand>
</feature>
<feature type="mutagenesis site" description="In UME5-4; loss of activity." evidence="19">
    <original>K</original>
    <variation>R</variation>
    <location>
        <position position="183"/>
    </location>
</feature>
<feature type="mutagenesis site" description="Abrogates kinase activity and transcriptional repression." evidence="4 5 6 8 9 12 20">
    <original>D</original>
    <variation>A</variation>
    <location>
        <position position="304"/>
    </location>
</feature>
<name>SSN3_YEAST</name>
<comment type="function">
    <text evidence="4 5 6 7 8 9 10 11 12 13 14 15 16 17 18 20 21">Component of the SRB8-11 complex. The SRB8-11 complex is a regulatory module of the Mediator complex which is itself involved in regulation of basal and activated RNA polymerase II-dependent transcription. The SRB8-11 complex may be involved in the transcriptional repression of a subset of genes regulated by Mediator. It may inhibit the association of the Mediator complex with RNA polymerase II to form the holoenzyme complex. The SRB8-11 complex phosphorylates the C-terminal domain (CTD) of the largest subunit of RNA polymerase II RPB1 at serines 2 and 5. The SSN3/SRB10 and SSN8/SRB11 kinase-cyclin pair may also positively and negatively regulate numerous transcriptional activators in response to changes in nutritional and physiological conditions. Phosphorylates GCN4, promoting its ubiquitin-mediated degradation, and MSN2, promoting its nuclear exclusion. Phosphorylates STE12, thereby promoting its degradation and inhibition of filamentous growth. Phosphorylates GAL4, and this phosphorylation is required for efficient galactose-inducible transcription. Also phosphorylates BDF1 and the TAF2 subunit of the TFIID complex.</text>
</comment>
<comment type="catalytic activity">
    <reaction evidence="4 6 8 9 10 14 20">
        <text>L-seryl-[protein] + ATP = O-phospho-L-seryl-[protein] + ADP + H(+)</text>
        <dbReference type="Rhea" id="RHEA:17989"/>
        <dbReference type="Rhea" id="RHEA-COMP:9863"/>
        <dbReference type="Rhea" id="RHEA-COMP:11604"/>
        <dbReference type="ChEBI" id="CHEBI:15378"/>
        <dbReference type="ChEBI" id="CHEBI:29999"/>
        <dbReference type="ChEBI" id="CHEBI:30616"/>
        <dbReference type="ChEBI" id="CHEBI:83421"/>
        <dbReference type="ChEBI" id="CHEBI:456216"/>
        <dbReference type="EC" id="2.7.11.22"/>
    </reaction>
</comment>
<comment type="catalytic activity">
    <reaction evidence="4 6 8 9 10 14 20">
        <text>L-threonyl-[protein] + ATP = O-phospho-L-threonyl-[protein] + ADP + H(+)</text>
        <dbReference type="Rhea" id="RHEA:46608"/>
        <dbReference type="Rhea" id="RHEA-COMP:11060"/>
        <dbReference type="Rhea" id="RHEA-COMP:11605"/>
        <dbReference type="ChEBI" id="CHEBI:15378"/>
        <dbReference type="ChEBI" id="CHEBI:30013"/>
        <dbReference type="ChEBI" id="CHEBI:30616"/>
        <dbReference type="ChEBI" id="CHEBI:61977"/>
        <dbReference type="ChEBI" id="CHEBI:456216"/>
        <dbReference type="EC" id="2.7.11.22"/>
    </reaction>
</comment>
<comment type="catalytic activity">
    <reaction evidence="4 6 8 9 10 14 20">
        <text>[DNA-directed RNA polymerase] + ATP = phospho-[DNA-directed RNA polymerase] + ADP + H(+)</text>
        <dbReference type="Rhea" id="RHEA:10216"/>
        <dbReference type="Rhea" id="RHEA-COMP:11321"/>
        <dbReference type="Rhea" id="RHEA-COMP:11322"/>
        <dbReference type="ChEBI" id="CHEBI:15378"/>
        <dbReference type="ChEBI" id="CHEBI:30616"/>
        <dbReference type="ChEBI" id="CHEBI:43176"/>
        <dbReference type="ChEBI" id="CHEBI:68546"/>
        <dbReference type="ChEBI" id="CHEBI:456216"/>
        <dbReference type="EC" id="2.7.11.23"/>
    </reaction>
</comment>
<comment type="subunit">
    <text evidence="5 7 8 10 18 20">Component of the SRB8-11 complex which consists of SRB8, SSN2/SRB9, SSN3/SRB10 and SSN8/SRB11. The SRB8-11 complex associates with the Mediator complex. The SSN3/SRB10 and SSN8/SRB11 kinase-cyclin pair also associate with the RNA polymerase II holoenzyme. Interacts with TUP1.</text>
</comment>
<comment type="subcellular location">
    <subcellularLocation>
        <location evidence="22">Nucleus</location>
    </subcellularLocation>
</comment>
<comment type="induction">
    <text evidence="9 21">Protein level and kinase activity are reduced during nitrogen starvation.</text>
</comment>
<comment type="similarity">
    <text evidence="22">Belongs to the protein kinase superfamily. CMGC Ser/Thr protein kinase family. CDC2/CDKX subfamily.</text>
</comment>
<comment type="sequence caution" evidence="22">
    <conflict type="erroneous initiation">
        <sequence resource="EMBL-CDS" id="AAC13785"/>
    </conflict>
</comment>
<sequence length="555" mass="62847">MYNGKDRAQNSYQPMYQRPMQVQGQQQAQSFVGKKNTIGSVHGKAPMLMANNDVFTIGPYRARKDRMRVSVLEKYEVIGYIAAGTYGKVYKAKRQINSGTNSANGSSLNGTNAKIPQFDSTQPKSSSSMDMQANTNALRRNLLKDEGVTPGRIRTTREDVSPHYNSQKQTLIKKPLTVFYAIKKFKTEKDGVEQLHYTGISQSACREMALCRELHNKHLTTLVEIFLERKCVHMVYEYAEHDLLQIIHFHSHPEKRMIPPRMVRSIMWQLLDGVSYLHQNWVLHRDLKPANIMVTIDGCVKIGDLGLARKFHNMLQTLYTGDKVVVTIWYRAPELLLGARHYTPAVDLWSVGCIFAELIGLQPIFKGEEAKLDSKKTVPFQVNQLQRILEVLGTPDQKIWPYLEKYPEYDQITKFPKYRDNLATWYHSAGGRDKHALSLLYHLLNYDPIKRIDAFNALEHKYFTESDIPVSENVFEGLTYKYPARRIHTNDNDIMNLGSRTKNNTQASGITAGAAANALGGLGVNRRILAAAAAAAAAVSGNNASDEPSRKKNRR</sequence>
<gene>
    <name type="primary">SSN3</name>
    <name type="synonym">ARE1</name>
    <name type="synonym">CDK8</name>
    <name type="synonym">GIG2</name>
    <name type="synonym">SRB10</name>
    <name type="synonym">UME5</name>
    <name type="ordered locus">YPL042C</name>
</gene>
<proteinExistence type="evidence at protein level"/>
<keyword id="KW-0002">3D-structure</keyword>
<keyword id="KW-0010">Activator</keyword>
<keyword id="KW-0067">ATP-binding</keyword>
<keyword id="KW-0418">Kinase</keyword>
<keyword id="KW-0460">Magnesium</keyword>
<keyword id="KW-0469">Meiosis</keyword>
<keyword id="KW-0479">Metal-binding</keyword>
<keyword id="KW-0547">Nucleotide-binding</keyword>
<keyword id="KW-0539">Nucleus</keyword>
<keyword id="KW-1185">Reference proteome</keyword>
<keyword id="KW-0678">Repressor</keyword>
<keyword id="KW-0723">Serine/threonine-protein kinase</keyword>
<keyword id="KW-0804">Transcription</keyword>
<keyword id="KW-0805">Transcription regulation</keyword>
<keyword id="KW-0808">Transferase</keyword>
<reference key="1">
    <citation type="journal article" date="1994" name="Mol. Cell. Biol.">
        <title>The yeast UME5 gene regulates the stability of meiotic mRNAs in response to glucose.</title>
        <authorList>
            <person name="Surosky R.T."/>
            <person name="Strich R."/>
            <person name="Esposito R.E."/>
        </authorList>
    </citation>
    <scope>NUCLEOTIDE SEQUENCE [GENOMIC DNA]</scope>
    <scope>MUTAGENESIS OF LYS-183</scope>
</reference>
<reference key="2">
    <citation type="journal article" date="1995" name="Nature">
        <title>A kinase-cyclin pair in the RNA polymerase II holoenzyme.</title>
        <authorList>
            <person name="Liao S.-M."/>
            <person name="Zhang J."/>
            <person name="Jeffery D.A."/>
            <person name="Koleske A.J."/>
            <person name="Thompson C.M."/>
            <person name="Chao D.M."/>
            <person name="Viljoen M."/>
            <person name="van Vuuren H.J.J."/>
            <person name="Young R.A."/>
        </authorList>
    </citation>
    <scope>NUCLEOTIDE SEQUENCE [GENOMIC DNA]</scope>
    <scope>FUNCTION</scope>
    <scope>INTERACTION WITH SSN8</scope>
    <source>
        <strain>ATCC 204508 / S288c</strain>
    </source>
</reference>
<reference key="3">
    <citation type="journal article" date="1997" name="Nature">
        <title>The nucleotide sequence of Saccharomyces cerevisiae chromosome XVI.</title>
        <authorList>
            <person name="Bussey H."/>
            <person name="Storms R.K."/>
            <person name="Ahmed A."/>
            <person name="Albermann K."/>
            <person name="Allen E."/>
            <person name="Ansorge W."/>
            <person name="Araujo R."/>
            <person name="Aparicio A."/>
            <person name="Barrell B.G."/>
            <person name="Badcock K."/>
            <person name="Benes V."/>
            <person name="Botstein D."/>
            <person name="Bowman S."/>
            <person name="Brueckner M."/>
            <person name="Carpenter J."/>
            <person name="Cherry J.M."/>
            <person name="Chung E."/>
            <person name="Churcher C.M."/>
            <person name="Coster F."/>
            <person name="Davis K."/>
            <person name="Davis R.W."/>
            <person name="Dietrich F.S."/>
            <person name="Delius H."/>
            <person name="DiPaolo T."/>
            <person name="Dubois E."/>
            <person name="Duesterhoeft A."/>
            <person name="Duncan M."/>
            <person name="Floeth M."/>
            <person name="Fortin N."/>
            <person name="Friesen J.D."/>
            <person name="Fritz C."/>
            <person name="Goffeau A."/>
            <person name="Hall J."/>
            <person name="Hebling U."/>
            <person name="Heumann K."/>
            <person name="Hilbert H."/>
            <person name="Hillier L.W."/>
            <person name="Hunicke-Smith S."/>
            <person name="Hyman R.W."/>
            <person name="Johnston M."/>
            <person name="Kalman S."/>
            <person name="Kleine K."/>
            <person name="Komp C."/>
            <person name="Kurdi O."/>
            <person name="Lashkari D."/>
            <person name="Lew H."/>
            <person name="Lin A."/>
            <person name="Lin D."/>
            <person name="Louis E.J."/>
            <person name="Marathe R."/>
            <person name="Messenguy F."/>
            <person name="Mewes H.-W."/>
            <person name="Mirtipati S."/>
            <person name="Moestl D."/>
            <person name="Mueller-Auer S."/>
            <person name="Namath A."/>
            <person name="Nentwich U."/>
            <person name="Oefner P."/>
            <person name="Pearson D."/>
            <person name="Petel F.X."/>
            <person name="Pohl T.M."/>
            <person name="Purnelle B."/>
            <person name="Rajandream M.A."/>
            <person name="Rechmann S."/>
            <person name="Rieger M."/>
            <person name="Riles L."/>
            <person name="Roberts D."/>
            <person name="Schaefer M."/>
            <person name="Scharfe M."/>
            <person name="Scherens B."/>
            <person name="Schramm S."/>
            <person name="Schroeder M."/>
            <person name="Sdicu A.-M."/>
            <person name="Tettelin H."/>
            <person name="Urrestarazu L.A."/>
            <person name="Ushinsky S."/>
            <person name="Vierendeels F."/>
            <person name="Vissers S."/>
            <person name="Voss H."/>
            <person name="Walsh S.V."/>
            <person name="Wambutt R."/>
            <person name="Wang Y."/>
            <person name="Wedler E."/>
            <person name="Wedler H."/>
            <person name="Winnett E."/>
            <person name="Zhong W.-W."/>
            <person name="Zollner A."/>
            <person name="Vo D.H."/>
            <person name="Hani J."/>
        </authorList>
    </citation>
    <scope>NUCLEOTIDE SEQUENCE [LARGE SCALE GENOMIC DNA]</scope>
    <source>
        <strain>ATCC 204508 / S288c</strain>
    </source>
</reference>
<reference key="4">
    <citation type="journal article" date="2014" name="G3 (Bethesda)">
        <title>The reference genome sequence of Saccharomyces cerevisiae: Then and now.</title>
        <authorList>
            <person name="Engel S.R."/>
            <person name="Dietrich F.S."/>
            <person name="Fisk D.G."/>
            <person name="Binkley G."/>
            <person name="Balakrishnan R."/>
            <person name="Costanzo M.C."/>
            <person name="Dwight S.S."/>
            <person name="Hitz B.C."/>
            <person name="Karra K."/>
            <person name="Nash R.S."/>
            <person name="Weng S."/>
            <person name="Wong E.D."/>
            <person name="Lloyd P."/>
            <person name="Skrzypek M.S."/>
            <person name="Miyasato S.R."/>
            <person name="Simison M."/>
            <person name="Cherry J.M."/>
        </authorList>
    </citation>
    <scope>GENOME REANNOTATION</scope>
    <source>
        <strain>ATCC 204508 / S288c</strain>
    </source>
</reference>
<reference key="5">
    <citation type="journal article" date="1998" name="Cell">
        <title>Dissecting the regulatory circuitry of a eukaryotic genome.</title>
        <authorList>
            <person name="Holstege F.C.P."/>
            <person name="Jennings E.G."/>
            <person name="Wyrick J.J."/>
            <person name="Lee T.I."/>
            <person name="Hengartner C.J."/>
            <person name="Green M.R."/>
            <person name="Golub T.R."/>
            <person name="Lander E.S."/>
            <person name="Young R.A."/>
        </authorList>
    </citation>
    <scope>FUNCTION</scope>
    <scope>INDUCTION</scope>
</reference>
<reference key="6">
    <citation type="journal article" date="1998" name="Mol. Cell">
        <title>Temporal regulation of RNA polymerase II by Srb10 and Kin28 cyclin-dependent kinases.</title>
        <authorList>
            <person name="Hengartner C.J."/>
            <person name="Myer V.E."/>
            <person name="Liao S.-M."/>
            <person name="Wilson C.J."/>
            <person name="Koh S.S."/>
            <person name="Young R.A."/>
        </authorList>
    </citation>
    <scope>FUNCTION</scope>
    <scope>CATALYTIC ACTIVITY</scope>
    <scope>INTERACTION WITH SSN8 AND THE RNA POLYMERASE II HOLOENZYME</scope>
    <scope>MUTAGENESIS OF ASP-304</scope>
</reference>
<reference key="7">
    <citation type="journal article" date="1999" name="Mol. Cell">
        <title>GAL4 is regulated by the RNA polymerase II holoenzyme-associated cyclin-dependent protein kinase SRB10/CDK8.</title>
        <authorList>
            <person name="Hirst M."/>
            <person name="Kobor M.S."/>
            <person name="Kuriakose N."/>
            <person name="Greenblatt J."/>
            <person name="Sadowski I."/>
        </authorList>
    </citation>
    <scope>FUNCTION</scope>
    <scope>CATALYTIC ACTIVITY</scope>
    <scope>MUTAGENESIS OF ASP-304</scope>
</reference>
<reference key="8">
    <citation type="journal article" date="2001" name="Genes Dev.">
        <title>Negative regulation of Gcn4 and Msn2 transcription factors by Srb10 cyclin-dependent kinase.</title>
        <authorList>
            <person name="Chi Y."/>
            <person name="Huddleston M.J."/>
            <person name="Zhang X."/>
            <person name="Young R.A."/>
            <person name="Annan R.S."/>
            <person name="Carr S.A."/>
            <person name="Deshaies R.J."/>
        </authorList>
    </citation>
    <scope>FUNCTION</scope>
    <scope>CATALYTIC ACTIVITY</scope>
    <scope>MUTAGENESIS OF ASP-304</scope>
</reference>
<reference key="9">
    <citation type="journal article" date="2001" name="J. Biol. Chem.">
        <title>The structural and functional organization of the yeast mediator complex.</title>
        <authorList>
            <person name="Kang J.S."/>
            <person name="Kim S.H."/>
            <person name="Hwang M.S."/>
            <person name="Han S.J."/>
            <person name="Lee Y.C."/>
            <person name="Kim Y.-J."/>
        </authorList>
    </citation>
    <scope>INTERACTION WITH MED1 AND MED4</scope>
    <scope>FUNCTION OF THE MEDIATOR COMPLEX</scope>
    <scope>INTERACTION OF THE MEDIATOR COMPLEX WITH RNA POLYMERASE II</scope>
</reference>
<reference key="10">
    <citation type="journal article" date="2001" name="Proc. Natl. Acad. Sci. U.S.A.">
        <title>Interaction of a transcriptional repressor with the RNA polymerase II holoenzyme plays a crucial role in repression.</title>
        <authorList>
            <person name="Zaman Z."/>
            <person name="Ansari A.Z."/>
            <person name="Koh S.S."/>
            <person name="Young R."/>
            <person name="Ptashne M."/>
        </authorList>
    </citation>
    <scope>FUNCTION</scope>
    <scope>INTERACTION WITH SSN8 AND TUP1</scope>
    <scope>MUTAGENESIS OF ASP-304</scope>
</reference>
<reference key="11">
    <citation type="journal article" date="2002" name="J. Biol. Chem.">
        <title>A complex of the Srb8, -9, -10, and -11 transcriptional regulatory proteins from yeast.</title>
        <authorList>
            <person name="Borggrefe T."/>
            <person name="Davis R."/>
            <person name="Erdjument-Bromage H."/>
            <person name="Tempst P."/>
            <person name="Kornberg R.D."/>
        </authorList>
    </citation>
    <scope>IDENTIFICATION IN THE SRB8-11 COMPLEX</scope>
    <scope>FUNCTION OF THE SRB8-11 COMPLEX</scope>
    <scope>CATALYTIC ACTIVITY</scope>
    <scope>MUTAGENESIS OF ASP-304</scope>
</reference>
<reference key="12">
    <citation type="journal article" date="2003" name="Nature">
        <title>Srb10/Cdk8 regulates yeast filamentous growth by phosphorylating the transcription factor Ste12.</title>
        <authorList>
            <person name="Nelson C."/>
            <person name="Goto S."/>
            <person name="Lund K."/>
            <person name="Hung W."/>
            <person name="Sadowski I."/>
        </authorList>
    </citation>
    <scope>FUNCTION</scope>
    <scope>CATALYTIC ACTIVITY</scope>
    <scope>INDUCTION</scope>
    <scope>MUTAGENESIS OF ASP-304</scope>
</reference>
<reference key="13">
    <citation type="journal article" date="2004" name="Mol. Cell">
        <title>A unified nomenclature for protein subunits of mediator complexes linking transcriptional regulators to RNA polymerase II.</title>
        <authorList>
            <person name="Bourbon H.-M."/>
            <person name="Aguilera A."/>
            <person name="Ansari A.Z."/>
            <person name="Asturias F.J."/>
            <person name="Berk A.J."/>
            <person name="Bjoerklund S."/>
            <person name="Blackwell T.K."/>
            <person name="Borggrefe T."/>
            <person name="Carey M."/>
            <person name="Carlson M."/>
            <person name="Conaway J.W."/>
            <person name="Conaway R.C."/>
            <person name="Emmons S.W."/>
            <person name="Fondell J.D."/>
            <person name="Freedman L.P."/>
            <person name="Fukasawa T."/>
            <person name="Gustafsson C.M."/>
            <person name="Han M."/>
            <person name="He X."/>
            <person name="Herman P.K."/>
            <person name="Hinnebusch A.G."/>
            <person name="Holmberg S."/>
            <person name="Holstege F.C.P."/>
            <person name="Jaehning J.A."/>
            <person name="Kim Y.-J."/>
            <person name="Kuras L."/>
            <person name="Leutz A."/>
            <person name="Lis J.T."/>
            <person name="Meisterernest M."/>
            <person name="Naeaer A.M."/>
            <person name="Nasmyth K."/>
            <person name="Parvin J.D."/>
            <person name="Ptashne M."/>
            <person name="Reinberg D."/>
            <person name="Ronne H."/>
            <person name="Sadowski I."/>
            <person name="Sakurai H."/>
            <person name="Sipiczki M."/>
            <person name="Sternberg P.W."/>
            <person name="Stillman D.J."/>
            <person name="Strich R."/>
            <person name="Struhl K."/>
            <person name="Svejstrup J.Q."/>
            <person name="Tuck S."/>
            <person name="Winston F."/>
            <person name="Roeder R.G."/>
            <person name="Kornberg R.D."/>
        </authorList>
    </citation>
    <scope>NOMENCLATURE</scope>
</reference>
<reference key="14">
    <citation type="journal article" date="2004" name="Mol. Cell. Biol.">
        <title>Two cyclin-dependent kinases promote RNA polymerase II transcription and formation of the scaffold complex.</title>
        <authorList>
            <person name="Liu Y."/>
            <person name="Kung C."/>
            <person name="Fishburn J."/>
            <person name="Ansari A.Z."/>
            <person name="Shokat K.M."/>
            <person name="Hahn S."/>
        </authorList>
    </citation>
    <scope>FUNCTION</scope>
    <scope>CATALYTIC ACTIVITY</scope>
    <scope>INTERACTION WITH RNA POLYMERASE II</scope>
</reference>
<reference key="15">
    <citation type="journal article" date="2004" name="Mol. Biol. Cell">
        <title>Promoter-dependent roles for the Srb10 cyclin-dependent kinase and the Hda1 deacetylase in Tup1-mediated repression in Saccharomyces cerevisiae.</title>
        <authorList>
            <person name="Green S.R."/>
            <person name="Johnson A.D."/>
        </authorList>
    </citation>
    <scope>FUNCTION</scope>
    <scope>MUTAGENESIS OF ASP-304</scope>
</reference>
<reference key="16">
    <citation type="journal article" date="2004" name="Nucleic Acids Res.">
        <title>A high resolution protein interaction map of the yeast Mediator complex.</title>
        <authorList>
            <person name="Guglielmi B."/>
            <person name="van Berkum N.L."/>
            <person name="Klapholz B."/>
            <person name="Bijma T."/>
            <person name="Boube M."/>
            <person name="Boschiero C."/>
            <person name="Bourbon H.-M."/>
            <person name="Holstege F.C.P."/>
            <person name="Werner M."/>
        </authorList>
    </citation>
    <scope>TOPOLOGY OF THE MEDIATOR COMPLEX</scope>
</reference>
<reference key="17">
    <citation type="journal article" date="2004" name="Proc. Natl. Acad. Sci. U.S.A.">
        <title>Site-specific Srb10-dependent phosphorylation of the yeast Mediator subunit Med2 regulates gene expression from the 2-micrometer plasmid.</title>
        <authorList>
            <person name="Hallberg M."/>
            <person name="Polozkov G.V."/>
            <person name="Hu G.-Z."/>
            <person name="Beve J."/>
            <person name="Gustafsson C.M."/>
            <person name="Ronne H."/>
            <person name="Bjoerklund S."/>
        </authorList>
    </citation>
    <scope>FUNCTION</scope>
</reference>
<reference key="18">
    <citation type="journal article" date="2005" name="J. Biol. Chem.">
        <title>Mediator and TFIIH govern carboxyl-terminal domain-dependent transcription in yeast extracts.</title>
        <authorList>
            <person name="Nair D."/>
            <person name="Kim Y."/>
            <person name="Myers L.C."/>
        </authorList>
    </citation>
    <scope>FUNCTION OF THE MEDIATOR COMPLEX</scope>
</reference>
<reference key="19">
    <citation type="journal article" date="2005" name="Mol. Cell">
        <title>Mediator expression profiling epistasis reveals a signal transduction pathway with antagonistic submodules and highly specific downstream targets.</title>
        <authorList>
            <person name="van de Peppel J."/>
            <person name="Kettelarij N."/>
            <person name="van Bakel H."/>
            <person name="Kockelkorn T.T.J.P."/>
            <person name="van Leenen D."/>
            <person name="Holstege F.C.P."/>
        </authorList>
    </citation>
    <scope>FUNCTION</scope>
</reference>
<reference key="20">
    <citation type="journal article" date="2005" name="Mol. Cell. Biol.">
        <title>The Saccharomyces cerevisiae Srb8-Srb11 complex functions with the SAGA complex during Gal4-activated transcription.</title>
        <authorList>
            <person name="Larschan E."/>
            <person name="Winston F."/>
        </authorList>
    </citation>
    <scope>FUNCTION OF THE SRB8-11 COMPLEX</scope>
</reference>
<reference key="21">
    <citation type="journal article" date="2005" name="Proc. Natl. Acad. Sci. U.S.A.">
        <title>Transcriptional activating regions target attached substrates to a cyclin-dependent kinase.</title>
        <authorList>
            <person name="Ansari A.Z."/>
            <person name="Ogirala A."/>
            <person name="Ptashne M."/>
        </authorList>
    </citation>
    <scope>FUNCTION</scope>
    <scope>CATALYTIC ACTIVITY</scope>
</reference>
<reference key="22">
    <citation type="journal article" date="2006" name="Mol. Cell">
        <title>Genome-wide location of the coactivator mediator: binding without activation and transient Cdk8 interaction on DNA.</title>
        <authorList>
            <person name="Andrau J.-C."/>
            <person name="van de Pasch L."/>
            <person name="Lijnzaad P."/>
            <person name="Bijma T."/>
            <person name="Koerkamp M.G."/>
            <person name="van de Peppel J."/>
            <person name="Werner M."/>
            <person name="Holstege F.C.P."/>
        </authorList>
    </citation>
    <scope>FUNCTION</scope>
</reference>
<dbReference type="EC" id="2.7.11.22" evidence="4 6 8 9 10 14 20"/>
<dbReference type="EC" id="2.7.11.23" evidence="4 6 8 9 10 14 20"/>
<dbReference type="EMBL" id="L27151">
    <property type="protein sequence ID" value="AAA35193.1"/>
    <property type="molecule type" value="Genomic_DNA"/>
</dbReference>
<dbReference type="EMBL" id="U20222">
    <property type="protein sequence ID" value="AAC13785.1"/>
    <property type="status" value="ALT_INIT"/>
    <property type="molecule type" value="Genomic_DNA"/>
</dbReference>
<dbReference type="EMBL" id="U44030">
    <property type="protein sequence ID" value="AAB68178.1"/>
    <property type="molecule type" value="Genomic_DNA"/>
</dbReference>
<dbReference type="EMBL" id="BK006949">
    <property type="protein sequence ID" value="DAA11387.1"/>
    <property type="molecule type" value="Genomic_DNA"/>
</dbReference>
<dbReference type="PIR" id="S50157">
    <property type="entry name" value="S50157"/>
</dbReference>
<dbReference type="RefSeq" id="NP_015283.1">
    <property type="nucleotide sequence ID" value="NM_001183856.1"/>
</dbReference>
<dbReference type="PDB" id="7KPV">
    <property type="method" value="EM"/>
    <property type="resolution" value="3.80 A"/>
    <property type="chains" value="A=1-555"/>
</dbReference>
<dbReference type="PDB" id="7KPX">
    <property type="method" value="EM"/>
    <property type="resolution" value="4.40 A"/>
    <property type="chains" value="A=1-555"/>
</dbReference>
<dbReference type="PDBsum" id="7KPV"/>
<dbReference type="PDBsum" id="7KPX"/>
<dbReference type="EMDB" id="EMD-22989"/>
<dbReference type="EMDB" id="EMD-22991"/>
<dbReference type="SMR" id="P39073"/>
<dbReference type="BioGRID" id="36137">
    <property type="interactions" value="395"/>
</dbReference>
<dbReference type="ComplexPortal" id="CPX-1853">
    <property type="entry name" value="CKM complex"/>
</dbReference>
<dbReference type="DIP" id="DIP-2574N"/>
<dbReference type="FunCoup" id="P39073">
    <property type="interactions" value="1396"/>
</dbReference>
<dbReference type="IntAct" id="P39073">
    <property type="interactions" value="41"/>
</dbReference>
<dbReference type="MINT" id="P39073"/>
<dbReference type="STRING" id="4932.YPL042C"/>
<dbReference type="BindingDB" id="P39073"/>
<dbReference type="ChEMBL" id="CHEMBL5395"/>
<dbReference type="iPTMnet" id="P39073"/>
<dbReference type="PaxDb" id="4932-YPL042C"/>
<dbReference type="PeptideAtlas" id="P39073"/>
<dbReference type="EnsemblFungi" id="YPL042C_mRNA">
    <property type="protein sequence ID" value="YPL042C"/>
    <property type="gene ID" value="YPL042C"/>
</dbReference>
<dbReference type="GeneID" id="856065"/>
<dbReference type="KEGG" id="sce:YPL042C"/>
<dbReference type="AGR" id="SGD:S000005963"/>
<dbReference type="SGD" id="S000005963">
    <property type="gene designation" value="SSN3"/>
</dbReference>
<dbReference type="VEuPathDB" id="FungiDB:YPL042C"/>
<dbReference type="eggNOG" id="KOG0666">
    <property type="taxonomic scope" value="Eukaryota"/>
</dbReference>
<dbReference type="GeneTree" id="ENSGT00940000175924"/>
<dbReference type="HOGENOM" id="CLU_000288_181_6_1"/>
<dbReference type="InParanoid" id="P39073"/>
<dbReference type="OMA" id="YFKNGGP"/>
<dbReference type="OrthoDB" id="6284126at2759"/>
<dbReference type="BioCyc" id="YEAST:G3O-33956-MONOMER"/>
<dbReference type="BRENDA" id="2.7.11.22">
    <property type="organism ID" value="984"/>
</dbReference>
<dbReference type="BRENDA" id="2.7.11.23">
    <property type="organism ID" value="984"/>
</dbReference>
<dbReference type="BioGRID-ORCS" id="856065">
    <property type="hits" value="2 hits in 13 CRISPR screens"/>
</dbReference>
<dbReference type="PRO" id="PR:P39073"/>
<dbReference type="Proteomes" id="UP000002311">
    <property type="component" value="Chromosome XVI"/>
</dbReference>
<dbReference type="RNAct" id="P39073">
    <property type="molecule type" value="protein"/>
</dbReference>
<dbReference type="GO" id="GO:1990508">
    <property type="term" value="C:CKM complex"/>
    <property type="evidence" value="ECO:0000353"/>
    <property type="project" value="ComplexPortal"/>
</dbReference>
<dbReference type="GO" id="GO:0016592">
    <property type="term" value="C:mediator complex"/>
    <property type="evidence" value="ECO:0000314"/>
    <property type="project" value="SGD"/>
</dbReference>
<dbReference type="GO" id="GO:0005634">
    <property type="term" value="C:nucleus"/>
    <property type="evidence" value="ECO:0000318"/>
    <property type="project" value="GO_Central"/>
</dbReference>
<dbReference type="GO" id="GO:0005524">
    <property type="term" value="F:ATP binding"/>
    <property type="evidence" value="ECO:0007669"/>
    <property type="project" value="UniProtKB-KW"/>
</dbReference>
<dbReference type="GO" id="GO:0004693">
    <property type="term" value="F:cyclin-dependent protein serine/threonine kinase activity"/>
    <property type="evidence" value="ECO:0000314"/>
    <property type="project" value="SGD"/>
</dbReference>
<dbReference type="GO" id="GO:0046872">
    <property type="term" value="F:metal ion binding"/>
    <property type="evidence" value="ECO:0007669"/>
    <property type="project" value="UniProtKB-KW"/>
</dbReference>
<dbReference type="GO" id="GO:0004672">
    <property type="term" value="F:protein kinase activity"/>
    <property type="evidence" value="ECO:0007005"/>
    <property type="project" value="SGD"/>
</dbReference>
<dbReference type="GO" id="GO:0106310">
    <property type="term" value="F:protein serine kinase activity"/>
    <property type="evidence" value="ECO:0007669"/>
    <property type="project" value="RHEA"/>
</dbReference>
<dbReference type="GO" id="GO:0008353">
    <property type="term" value="F:RNA polymerase II CTD heptapeptide repeat kinase activity"/>
    <property type="evidence" value="ECO:0000314"/>
    <property type="project" value="SGD"/>
</dbReference>
<dbReference type="GO" id="GO:0051321">
    <property type="term" value="P:meiotic cell cycle"/>
    <property type="evidence" value="ECO:0007669"/>
    <property type="project" value="UniProtKB-KW"/>
</dbReference>
<dbReference type="GO" id="GO:0060258">
    <property type="term" value="P:negative regulation of filamentous growth"/>
    <property type="evidence" value="ECO:0000315"/>
    <property type="project" value="SGD"/>
</dbReference>
<dbReference type="GO" id="GO:0000122">
    <property type="term" value="P:negative regulation of transcription by RNA polymerase II"/>
    <property type="evidence" value="ECO:0000315"/>
    <property type="project" value="SGD"/>
</dbReference>
<dbReference type="GO" id="GO:0070481">
    <property type="term" value="P:nuclear-transcribed mRNA catabolic process, non-stop decay"/>
    <property type="evidence" value="ECO:0000315"/>
    <property type="project" value="SGD"/>
</dbReference>
<dbReference type="GO" id="GO:0045944">
    <property type="term" value="P:positive regulation of transcription by RNA polymerase II"/>
    <property type="evidence" value="ECO:0000315"/>
    <property type="project" value="SGD"/>
</dbReference>
<dbReference type="GO" id="GO:0031648">
    <property type="term" value="P:protein destabilization"/>
    <property type="evidence" value="ECO:0000315"/>
    <property type="project" value="SGD"/>
</dbReference>
<dbReference type="CDD" id="cd07842">
    <property type="entry name" value="STKc_CDK8_like"/>
    <property type="match status" value="1"/>
</dbReference>
<dbReference type="FunFam" id="1.10.510.10:FF:000408">
    <property type="entry name" value="Serine/threonine-protein kinase SSN3"/>
    <property type="match status" value="1"/>
</dbReference>
<dbReference type="FunFam" id="3.30.200.20:FF:000774">
    <property type="entry name" value="Serine/threonine-protein kinase SSN3"/>
    <property type="match status" value="1"/>
</dbReference>
<dbReference type="Gene3D" id="3.30.200.20">
    <property type="entry name" value="Phosphorylase Kinase, domain 1"/>
    <property type="match status" value="1"/>
</dbReference>
<dbReference type="Gene3D" id="1.10.510.10">
    <property type="entry name" value="Transferase(Phosphotransferase) domain 1"/>
    <property type="match status" value="1"/>
</dbReference>
<dbReference type="InterPro" id="IPR050108">
    <property type="entry name" value="CDK"/>
</dbReference>
<dbReference type="InterPro" id="IPR011009">
    <property type="entry name" value="Kinase-like_dom_sf"/>
</dbReference>
<dbReference type="InterPro" id="IPR000719">
    <property type="entry name" value="Prot_kinase_dom"/>
</dbReference>
<dbReference type="InterPro" id="IPR008271">
    <property type="entry name" value="Ser/Thr_kinase_AS"/>
</dbReference>
<dbReference type="PANTHER" id="PTHR24056">
    <property type="entry name" value="CELL DIVISION PROTEIN KINASE"/>
    <property type="match status" value="1"/>
</dbReference>
<dbReference type="PANTHER" id="PTHR24056:SF495">
    <property type="entry name" value="CYCLIN-DEPENDENT KINASE 8-RELATED"/>
    <property type="match status" value="1"/>
</dbReference>
<dbReference type="Pfam" id="PF00069">
    <property type="entry name" value="Pkinase"/>
    <property type="match status" value="1"/>
</dbReference>
<dbReference type="SMART" id="SM00220">
    <property type="entry name" value="S_TKc"/>
    <property type="match status" value="1"/>
</dbReference>
<dbReference type="SUPFAM" id="SSF56112">
    <property type="entry name" value="Protein kinase-like (PK-like)"/>
    <property type="match status" value="1"/>
</dbReference>
<dbReference type="PROSITE" id="PS50011">
    <property type="entry name" value="PROTEIN_KINASE_DOM"/>
    <property type="match status" value="1"/>
</dbReference>
<dbReference type="PROSITE" id="PS00108">
    <property type="entry name" value="PROTEIN_KINASE_ST"/>
    <property type="match status" value="1"/>
</dbReference>
<organism>
    <name type="scientific">Saccharomyces cerevisiae (strain ATCC 204508 / S288c)</name>
    <name type="common">Baker's yeast</name>
    <dbReference type="NCBI Taxonomy" id="559292"/>
    <lineage>
        <taxon>Eukaryota</taxon>
        <taxon>Fungi</taxon>
        <taxon>Dikarya</taxon>
        <taxon>Ascomycota</taxon>
        <taxon>Saccharomycotina</taxon>
        <taxon>Saccharomycetes</taxon>
        <taxon>Saccharomycetales</taxon>
        <taxon>Saccharomycetaceae</taxon>
        <taxon>Saccharomyces</taxon>
    </lineage>
</organism>